<organism>
    <name type="scientific">Delia radicum</name>
    <name type="common">Cabbage root fly</name>
    <name type="synonym">Anthomyia brassicae</name>
    <dbReference type="NCBI Taxonomy" id="30064"/>
    <lineage>
        <taxon>Eukaryota</taxon>
        <taxon>Metazoa</taxon>
        <taxon>Ecdysozoa</taxon>
        <taxon>Arthropoda</taxon>
        <taxon>Hexapoda</taxon>
        <taxon>Insecta</taxon>
        <taxon>Pterygota</taxon>
        <taxon>Neoptera</taxon>
        <taxon>Endopterygota</taxon>
        <taxon>Diptera</taxon>
        <taxon>Brachycera</taxon>
        <taxon>Muscomorpha</taxon>
        <taxon>Muscoidea</taxon>
        <taxon>Anthomyiidae</taxon>
        <taxon>Anthomyiinae</taxon>
        <taxon>Delia</taxon>
    </lineage>
</organism>
<protein>
    <recommendedName>
        <fullName evidence="5 6">Myosuppressin</fullName>
        <shortName evidence="6">MS</shortName>
    </recommendedName>
    <component>
        <recommendedName>
            <fullName evidence="5 6">Myosuppressin(2-10)</fullName>
            <shortName evidence="6">MS(2-10)</shortName>
        </recommendedName>
    </component>
</protein>
<feature type="peptide" id="PRO_0000419728" description="Myosuppressin" evidence="3 4">
    <location>
        <begin position="1"/>
        <end position="10"/>
    </location>
</feature>
<feature type="peptide" id="PRO_0000419729" description="Myosuppressin(2-10)" evidence="3 4">
    <location>
        <begin position="2"/>
        <end position="10"/>
    </location>
</feature>
<feature type="modified residue" description="Phenylalanine amide" evidence="3 4">
    <location>
        <position position="10"/>
    </location>
</feature>
<proteinExistence type="evidence at protein level"/>
<evidence type="ECO:0000250" key="1">
    <source>
        <dbReference type="UniProtKB" id="P61849"/>
    </source>
</evidence>
<evidence type="ECO:0000255" key="2"/>
<evidence type="ECO:0000269" key="3">
    <source>
    </source>
</evidence>
<evidence type="ECO:0000269" key="4">
    <source>
    </source>
</evidence>
<evidence type="ECO:0000303" key="5">
    <source>
    </source>
</evidence>
<evidence type="ECO:0000303" key="6">
    <source>
    </source>
</evidence>
<evidence type="ECO:0000305" key="7"/>
<reference evidence="7" key="1">
    <citation type="journal article" date="2011" name="Peptides">
        <title>Neuropeptides associated with the central nervous system of the cabbage root fly, Delia radicum (L).</title>
        <authorList>
            <person name="Audsley N."/>
            <person name="Matthews H.J."/>
            <person name="Down R.E."/>
            <person name="Weaver R.J."/>
        </authorList>
    </citation>
    <scope>PROTEIN SEQUENCE</scope>
    <scope>TISSUE SPECIFICITY</scope>
    <scope>MASS SPECTROMETRY</scope>
    <scope>AMIDATION AT PHE-10</scope>
    <source>
        <tissue evidence="3">Abdominal ganglion</tissue>
        <tissue evidence="3">Brain</tissue>
        <tissue evidence="3">Corpora allata</tissue>
        <tissue evidence="3">Corpora cardiaca</tissue>
    </source>
</reference>
<reference evidence="7" key="2">
    <citation type="journal article" date="2012" name="PLoS ONE">
        <title>Peptidomics of the agriculturally damaging larval stage of the cabbage root fly Delia radicum (Diptera: Anthomyiidae).</title>
        <authorList>
            <person name="Zoephel J."/>
            <person name="Reiher W."/>
            <person name="Rexer K.-H."/>
            <person name="Kahnt J."/>
            <person name="Wegener C."/>
        </authorList>
    </citation>
    <scope>PROTEIN SEQUENCE</scope>
    <scope>TISSUE SPECIFICITY</scope>
    <scope>DEVELOPMENTAL STAGE</scope>
    <scope>MASS SPECTROMETRY</scope>
    <scope>AMIDATION AT PHE-10</scope>
    <source>
        <tissue evidence="4">CNS</tissue>
        <tissue evidence="4">Ring ganglion</tissue>
    </source>
</reference>
<comment type="function">
    <text evidence="1">Myoinhibiting neuropeptide.</text>
</comment>
<comment type="subcellular location">
    <subcellularLocation>
        <location evidence="1">Secreted</location>
    </subcellularLocation>
</comment>
<comment type="tissue specificity">
    <text evidence="3 4">In larvae, both myosuppressin and myosuppressin(2-10) are expressed in the CNS but not the midgut, thoracic perisympathetic organs (tPSO) and abdominal perisympathetic organs (aPSO). Myosuppressin is expressed in the ring gland (at protein level). In adults, myosuppressin is expressed in brain, cardiaca, corpora allata and thoracic-abdominal ganglion (at protein level).</text>
</comment>
<comment type="developmental stage">
    <text evidence="3 4">Detected in larvae and adults.</text>
</comment>
<comment type="mass spectrometry" mass="1247.6" method="MALDI" evidence="3 4">
    <molecule>Myosuppressin</molecule>
</comment>
<comment type="mass spectrometry" mass="1247.7" method="MALDI" evidence="3 4">
    <molecule>Myosuppressin</molecule>
</comment>
<comment type="mass spectrometry" mass="1146.59" method="MALDI" evidence="4">
    <molecule>Myosuppressin(2-10)</molecule>
</comment>
<comment type="similarity">
    <text evidence="2">Belongs to the myosuppressin family.</text>
</comment>
<accession>B3EWL9</accession>
<accession>B3EWM0</accession>
<name>NEMS_DELRA</name>
<keyword id="KW-0027">Amidation</keyword>
<keyword id="KW-0903">Direct protein sequencing</keyword>
<keyword id="KW-0527">Neuropeptide</keyword>
<keyword id="KW-0964">Secreted</keyword>
<sequence length="10" mass="1248">TDVDHVFLRF</sequence>
<dbReference type="GO" id="GO:0005576">
    <property type="term" value="C:extracellular region"/>
    <property type="evidence" value="ECO:0007669"/>
    <property type="project" value="UniProtKB-SubCell"/>
</dbReference>
<dbReference type="GO" id="GO:0007218">
    <property type="term" value="P:neuropeptide signaling pathway"/>
    <property type="evidence" value="ECO:0007669"/>
    <property type="project" value="UniProtKB-KW"/>
</dbReference>